<protein>
    <recommendedName>
        <fullName evidence="2">Elongation factor Tu</fullName>
        <shortName evidence="2">EF-Tu</shortName>
        <ecNumber evidence="2">3.6.5.3</ecNumber>
    </recommendedName>
</protein>
<dbReference type="EC" id="3.6.5.3" evidence="2"/>
<dbReference type="EMBL" id="AE017143">
    <property type="protein sequence ID" value="AAP95069.1"/>
    <property type="molecule type" value="Genomic_DNA"/>
</dbReference>
<dbReference type="EMBL" id="AE017143">
    <property type="protein sequence ID" value="AAP95583.1"/>
    <property type="molecule type" value="Genomic_DNA"/>
</dbReference>
<dbReference type="RefSeq" id="WP_010944123.1">
    <property type="nucleotide sequence ID" value="NC_002940.2"/>
</dbReference>
<dbReference type="SMR" id="Q7TTF9"/>
<dbReference type="STRING" id="233412.HD_0054"/>
<dbReference type="KEGG" id="hdu:HD_0054"/>
<dbReference type="KEGG" id="hdu:HD_0658"/>
<dbReference type="eggNOG" id="COG0050">
    <property type="taxonomic scope" value="Bacteria"/>
</dbReference>
<dbReference type="HOGENOM" id="CLU_007265_0_2_6"/>
<dbReference type="OrthoDB" id="9803139at2"/>
<dbReference type="Proteomes" id="UP000001022">
    <property type="component" value="Chromosome"/>
</dbReference>
<dbReference type="GO" id="GO:0005829">
    <property type="term" value="C:cytosol"/>
    <property type="evidence" value="ECO:0007669"/>
    <property type="project" value="TreeGrafter"/>
</dbReference>
<dbReference type="GO" id="GO:0005525">
    <property type="term" value="F:GTP binding"/>
    <property type="evidence" value="ECO:0007669"/>
    <property type="project" value="UniProtKB-UniRule"/>
</dbReference>
<dbReference type="GO" id="GO:0003924">
    <property type="term" value="F:GTPase activity"/>
    <property type="evidence" value="ECO:0007669"/>
    <property type="project" value="InterPro"/>
</dbReference>
<dbReference type="GO" id="GO:0097216">
    <property type="term" value="F:guanosine tetraphosphate binding"/>
    <property type="evidence" value="ECO:0007669"/>
    <property type="project" value="UniProtKB-ARBA"/>
</dbReference>
<dbReference type="GO" id="GO:0003746">
    <property type="term" value="F:translation elongation factor activity"/>
    <property type="evidence" value="ECO:0007669"/>
    <property type="project" value="UniProtKB-UniRule"/>
</dbReference>
<dbReference type="CDD" id="cd01884">
    <property type="entry name" value="EF_Tu"/>
    <property type="match status" value="1"/>
</dbReference>
<dbReference type="CDD" id="cd03697">
    <property type="entry name" value="EFTU_II"/>
    <property type="match status" value="1"/>
</dbReference>
<dbReference type="CDD" id="cd03707">
    <property type="entry name" value="EFTU_III"/>
    <property type="match status" value="1"/>
</dbReference>
<dbReference type="FunFam" id="2.40.30.10:FF:000001">
    <property type="entry name" value="Elongation factor Tu"/>
    <property type="match status" value="1"/>
</dbReference>
<dbReference type="FunFam" id="3.40.50.300:FF:000003">
    <property type="entry name" value="Elongation factor Tu"/>
    <property type="match status" value="1"/>
</dbReference>
<dbReference type="Gene3D" id="3.40.50.300">
    <property type="entry name" value="P-loop containing nucleotide triphosphate hydrolases"/>
    <property type="match status" value="1"/>
</dbReference>
<dbReference type="Gene3D" id="2.40.30.10">
    <property type="entry name" value="Translation factors"/>
    <property type="match status" value="2"/>
</dbReference>
<dbReference type="HAMAP" id="MF_00118_B">
    <property type="entry name" value="EF_Tu_B"/>
    <property type="match status" value="1"/>
</dbReference>
<dbReference type="InterPro" id="IPR041709">
    <property type="entry name" value="EF-Tu_GTP-bd"/>
</dbReference>
<dbReference type="InterPro" id="IPR050055">
    <property type="entry name" value="EF-Tu_GTPase"/>
</dbReference>
<dbReference type="InterPro" id="IPR004161">
    <property type="entry name" value="EFTu-like_2"/>
</dbReference>
<dbReference type="InterPro" id="IPR033720">
    <property type="entry name" value="EFTU_2"/>
</dbReference>
<dbReference type="InterPro" id="IPR031157">
    <property type="entry name" value="G_TR_CS"/>
</dbReference>
<dbReference type="InterPro" id="IPR027417">
    <property type="entry name" value="P-loop_NTPase"/>
</dbReference>
<dbReference type="InterPro" id="IPR005225">
    <property type="entry name" value="Small_GTP-bd"/>
</dbReference>
<dbReference type="InterPro" id="IPR000795">
    <property type="entry name" value="T_Tr_GTP-bd_dom"/>
</dbReference>
<dbReference type="InterPro" id="IPR009000">
    <property type="entry name" value="Transl_B-barrel_sf"/>
</dbReference>
<dbReference type="InterPro" id="IPR009001">
    <property type="entry name" value="Transl_elong_EF1A/Init_IF2_C"/>
</dbReference>
<dbReference type="InterPro" id="IPR004541">
    <property type="entry name" value="Transl_elong_EFTu/EF1A_bac/org"/>
</dbReference>
<dbReference type="InterPro" id="IPR004160">
    <property type="entry name" value="Transl_elong_EFTu/EF1A_C"/>
</dbReference>
<dbReference type="NCBIfam" id="TIGR00485">
    <property type="entry name" value="EF-Tu"/>
    <property type="match status" value="1"/>
</dbReference>
<dbReference type="NCBIfam" id="NF000766">
    <property type="entry name" value="PRK00049.1"/>
    <property type="match status" value="1"/>
</dbReference>
<dbReference type="NCBIfam" id="NF009372">
    <property type="entry name" value="PRK12735.1"/>
    <property type="match status" value="1"/>
</dbReference>
<dbReference type="NCBIfam" id="NF009373">
    <property type="entry name" value="PRK12736.1"/>
    <property type="match status" value="1"/>
</dbReference>
<dbReference type="NCBIfam" id="TIGR00231">
    <property type="entry name" value="small_GTP"/>
    <property type="match status" value="1"/>
</dbReference>
<dbReference type="PANTHER" id="PTHR43721:SF22">
    <property type="entry name" value="ELONGATION FACTOR TU, MITOCHONDRIAL"/>
    <property type="match status" value="1"/>
</dbReference>
<dbReference type="PANTHER" id="PTHR43721">
    <property type="entry name" value="ELONGATION FACTOR TU-RELATED"/>
    <property type="match status" value="1"/>
</dbReference>
<dbReference type="Pfam" id="PF00009">
    <property type="entry name" value="GTP_EFTU"/>
    <property type="match status" value="1"/>
</dbReference>
<dbReference type="Pfam" id="PF03144">
    <property type="entry name" value="GTP_EFTU_D2"/>
    <property type="match status" value="1"/>
</dbReference>
<dbReference type="Pfam" id="PF03143">
    <property type="entry name" value="GTP_EFTU_D3"/>
    <property type="match status" value="1"/>
</dbReference>
<dbReference type="PRINTS" id="PR00315">
    <property type="entry name" value="ELONGATNFCT"/>
</dbReference>
<dbReference type="SUPFAM" id="SSF50465">
    <property type="entry name" value="EF-Tu/eEF-1alpha/eIF2-gamma C-terminal domain"/>
    <property type="match status" value="1"/>
</dbReference>
<dbReference type="SUPFAM" id="SSF52540">
    <property type="entry name" value="P-loop containing nucleoside triphosphate hydrolases"/>
    <property type="match status" value="1"/>
</dbReference>
<dbReference type="SUPFAM" id="SSF50447">
    <property type="entry name" value="Translation proteins"/>
    <property type="match status" value="1"/>
</dbReference>
<dbReference type="PROSITE" id="PS00301">
    <property type="entry name" value="G_TR_1"/>
    <property type="match status" value="1"/>
</dbReference>
<dbReference type="PROSITE" id="PS51722">
    <property type="entry name" value="G_TR_2"/>
    <property type="match status" value="1"/>
</dbReference>
<feature type="initiator methionine" description="Removed" evidence="1">
    <location>
        <position position="1"/>
    </location>
</feature>
<feature type="chain" id="PRO_0000091331" description="Elongation factor Tu">
    <location>
        <begin position="2"/>
        <end position="394"/>
    </location>
</feature>
<feature type="domain" description="tr-type G">
    <location>
        <begin position="10"/>
        <end position="204"/>
    </location>
</feature>
<feature type="region of interest" description="G1" evidence="1">
    <location>
        <begin position="19"/>
        <end position="26"/>
    </location>
</feature>
<feature type="region of interest" description="G2" evidence="1">
    <location>
        <begin position="60"/>
        <end position="64"/>
    </location>
</feature>
<feature type="region of interest" description="G3" evidence="1">
    <location>
        <begin position="81"/>
        <end position="84"/>
    </location>
</feature>
<feature type="region of interest" description="G4" evidence="1">
    <location>
        <begin position="136"/>
        <end position="139"/>
    </location>
</feature>
<feature type="region of interest" description="G5" evidence="1">
    <location>
        <begin position="174"/>
        <end position="176"/>
    </location>
</feature>
<feature type="binding site" evidence="2">
    <location>
        <begin position="19"/>
        <end position="26"/>
    </location>
    <ligand>
        <name>GTP</name>
        <dbReference type="ChEBI" id="CHEBI:37565"/>
    </ligand>
</feature>
<feature type="binding site" evidence="2">
    <location>
        <position position="26"/>
    </location>
    <ligand>
        <name>Mg(2+)</name>
        <dbReference type="ChEBI" id="CHEBI:18420"/>
    </ligand>
</feature>
<feature type="binding site" evidence="2">
    <location>
        <begin position="81"/>
        <end position="85"/>
    </location>
    <ligand>
        <name>GTP</name>
        <dbReference type="ChEBI" id="CHEBI:37565"/>
    </ligand>
</feature>
<feature type="binding site" evidence="2">
    <location>
        <begin position="136"/>
        <end position="139"/>
    </location>
    <ligand>
        <name>GTP</name>
        <dbReference type="ChEBI" id="CHEBI:37565"/>
    </ligand>
</feature>
<reference key="1">
    <citation type="submission" date="2003-06" db="EMBL/GenBank/DDBJ databases">
        <title>The complete genome sequence of Haemophilus ducreyi.</title>
        <authorList>
            <person name="Munson R.S. Jr."/>
            <person name="Ray W.C."/>
            <person name="Mahairas G."/>
            <person name="Sabo P."/>
            <person name="Mungur R."/>
            <person name="Johnson L."/>
            <person name="Nguyen D."/>
            <person name="Wang J."/>
            <person name="Forst C."/>
            <person name="Hood L."/>
        </authorList>
    </citation>
    <scope>NUCLEOTIDE SEQUENCE [LARGE SCALE GENOMIC DNA]</scope>
    <source>
        <strain>35000HP / ATCC 700724</strain>
    </source>
</reference>
<accession>Q7TTF9</accession>
<keyword id="KW-0963">Cytoplasm</keyword>
<keyword id="KW-0251">Elongation factor</keyword>
<keyword id="KW-0342">GTP-binding</keyword>
<keyword id="KW-0378">Hydrolase</keyword>
<keyword id="KW-0460">Magnesium</keyword>
<keyword id="KW-0479">Metal-binding</keyword>
<keyword id="KW-0547">Nucleotide-binding</keyword>
<keyword id="KW-0648">Protein biosynthesis</keyword>
<keyword id="KW-1185">Reference proteome</keyword>
<evidence type="ECO:0000250" key="1"/>
<evidence type="ECO:0000255" key="2">
    <source>
        <dbReference type="HAMAP-Rule" id="MF_00118"/>
    </source>
</evidence>
<organism>
    <name type="scientific">Haemophilus ducreyi (strain 35000HP / ATCC 700724)</name>
    <dbReference type="NCBI Taxonomy" id="233412"/>
    <lineage>
        <taxon>Bacteria</taxon>
        <taxon>Pseudomonadati</taxon>
        <taxon>Pseudomonadota</taxon>
        <taxon>Gammaproteobacteria</taxon>
        <taxon>Pasteurellales</taxon>
        <taxon>Pasteurellaceae</taxon>
        <taxon>Haemophilus</taxon>
    </lineage>
</organism>
<comment type="function">
    <text evidence="2">GTP hydrolase that promotes the GTP-dependent binding of aminoacyl-tRNA to the A-site of ribosomes during protein biosynthesis.</text>
</comment>
<comment type="catalytic activity">
    <reaction evidence="2">
        <text>GTP + H2O = GDP + phosphate + H(+)</text>
        <dbReference type="Rhea" id="RHEA:19669"/>
        <dbReference type="ChEBI" id="CHEBI:15377"/>
        <dbReference type="ChEBI" id="CHEBI:15378"/>
        <dbReference type="ChEBI" id="CHEBI:37565"/>
        <dbReference type="ChEBI" id="CHEBI:43474"/>
        <dbReference type="ChEBI" id="CHEBI:58189"/>
        <dbReference type="EC" id="3.6.5.3"/>
    </reaction>
    <physiologicalReaction direction="left-to-right" evidence="2">
        <dbReference type="Rhea" id="RHEA:19670"/>
    </physiologicalReaction>
</comment>
<comment type="subunit">
    <text evidence="2">Monomer.</text>
</comment>
<comment type="subcellular location">
    <subcellularLocation>
        <location evidence="2">Cytoplasm</location>
    </subcellularLocation>
</comment>
<comment type="similarity">
    <text evidence="2">Belongs to the TRAFAC class translation factor GTPase superfamily. Classic translation factor GTPase family. EF-Tu/EF-1A subfamily.</text>
</comment>
<gene>
    <name evidence="2" type="primary">tufA</name>
    <name type="ordered locus">HD_0054</name>
</gene>
<gene>
    <name evidence="2" type="primary">tufB</name>
    <name type="ordered locus">HD_0658</name>
</gene>
<name>EFTU_HAEDU</name>
<proteinExistence type="inferred from homology"/>
<sequence length="394" mass="43427">MSKEKFERTKPHVNVGTIGHVDHGKTTLTAAITTVLAKHFGGAARAFDQIDNAPEEKARGITINTSHVEYDTETRHYAHVDCPGHADYVKNMITGAAQMDGAILVVAATDGPMPQTREHILLGRQVGVPYIIVFLNKCDMVDDEELLELVEMEVRELLSQYDFPGDDTPIVRGSALQALNGVPEWEEKIIELAQHLDSYIPEPERAIDKPFLLPIEDVFSISGRGTVVTGRVERGIIKSGEEVEIVGIKETTKTTVTGVEMFRKLLDEGRAGENVGALLRGTKREEIERGQVLAKPGTITPHTDFESEVYVLSKEEGGRHTPFFKGYRPQFYFRTTDVTGTIELPEGVEMVMPGDNIKMTVSLIHPIAMDEGLRFAIREGGRTVGAGVVAKIIK</sequence>